<keyword id="KW-0694">RNA-binding</keyword>
<keyword id="KW-0346">Stress response</keyword>
<sequence>MAKGQSLQDPFLNALRRERIPVSIYLVNGIKLQGQIESFDQFVILLKNTVNQMVYKHAISTVVPARPVSHHSGDRPQGDRPQEKSED</sequence>
<evidence type="ECO:0000255" key="1">
    <source>
        <dbReference type="HAMAP-Rule" id="MF_00436"/>
    </source>
</evidence>
<evidence type="ECO:0000255" key="2">
    <source>
        <dbReference type="PROSITE-ProRule" id="PRU01346"/>
    </source>
</evidence>
<evidence type="ECO:0000256" key="3">
    <source>
        <dbReference type="SAM" id="MobiDB-lite"/>
    </source>
</evidence>
<proteinExistence type="inferred from homology"/>
<dbReference type="EMBL" id="BA000031">
    <property type="protein sequence ID" value="BAC61080.1"/>
    <property type="molecule type" value="Genomic_DNA"/>
</dbReference>
<dbReference type="RefSeq" id="NP_799196.1">
    <property type="nucleotide sequence ID" value="NC_004603.1"/>
</dbReference>
<dbReference type="RefSeq" id="WP_005438329.1">
    <property type="nucleotide sequence ID" value="NC_004603.1"/>
</dbReference>
<dbReference type="SMR" id="Q87L07"/>
<dbReference type="GeneID" id="67375993"/>
<dbReference type="KEGG" id="vpa:VP2817"/>
<dbReference type="PATRIC" id="fig|223926.6.peg.2708"/>
<dbReference type="eggNOG" id="COG1923">
    <property type="taxonomic scope" value="Bacteria"/>
</dbReference>
<dbReference type="HOGENOM" id="CLU_113688_2_2_6"/>
<dbReference type="PRO" id="PR:Q87L07"/>
<dbReference type="Proteomes" id="UP000002493">
    <property type="component" value="Chromosome 1"/>
</dbReference>
<dbReference type="GO" id="GO:0005829">
    <property type="term" value="C:cytosol"/>
    <property type="evidence" value="ECO:0007669"/>
    <property type="project" value="TreeGrafter"/>
</dbReference>
<dbReference type="GO" id="GO:0003723">
    <property type="term" value="F:RNA binding"/>
    <property type="evidence" value="ECO:0007669"/>
    <property type="project" value="UniProtKB-UniRule"/>
</dbReference>
<dbReference type="GO" id="GO:0006355">
    <property type="term" value="P:regulation of DNA-templated transcription"/>
    <property type="evidence" value="ECO:0007669"/>
    <property type="project" value="InterPro"/>
</dbReference>
<dbReference type="GO" id="GO:0043487">
    <property type="term" value="P:regulation of RNA stability"/>
    <property type="evidence" value="ECO:0007669"/>
    <property type="project" value="TreeGrafter"/>
</dbReference>
<dbReference type="GO" id="GO:0045974">
    <property type="term" value="P:regulation of translation, ncRNA-mediated"/>
    <property type="evidence" value="ECO:0007669"/>
    <property type="project" value="TreeGrafter"/>
</dbReference>
<dbReference type="CDD" id="cd01716">
    <property type="entry name" value="Hfq"/>
    <property type="match status" value="1"/>
</dbReference>
<dbReference type="FunFam" id="2.30.30.100:FF:000001">
    <property type="entry name" value="RNA-binding protein Hfq"/>
    <property type="match status" value="1"/>
</dbReference>
<dbReference type="Gene3D" id="2.30.30.100">
    <property type="match status" value="1"/>
</dbReference>
<dbReference type="HAMAP" id="MF_00436">
    <property type="entry name" value="Hfq"/>
    <property type="match status" value="1"/>
</dbReference>
<dbReference type="InterPro" id="IPR005001">
    <property type="entry name" value="Hfq"/>
</dbReference>
<dbReference type="InterPro" id="IPR010920">
    <property type="entry name" value="LSM_dom_sf"/>
</dbReference>
<dbReference type="InterPro" id="IPR047575">
    <property type="entry name" value="Sm"/>
</dbReference>
<dbReference type="NCBIfam" id="TIGR02383">
    <property type="entry name" value="Hfq"/>
    <property type="match status" value="1"/>
</dbReference>
<dbReference type="NCBIfam" id="NF001602">
    <property type="entry name" value="PRK00395.1"/>
    <property type="match status" value="1"/>
</dbReference>
<dbReference type="PANTHER" id="PTHR34772">
    <property type="entry name" value="RNA-BINDING PROTEIN HFQ"/>
    <property type="match status" value="1"/>
</dbReference>
<dbReference type="PANTHER" id="PTHR34772:SF1">
    <property type="entry name" value="RNA-BINDING PROTEIN HFQ"/>
    <property type="match status" value="1"/>
</dbReference>
<dbReference type="Pfam" id="PF17209">
    <property type="entry name" value="Hfq"/>
    <property type="match status" value="1"/>
</dbReference>
<dbReference type="SUPFAM" id="SSF50182">
    <property type="entry name" value="Sm-like ribonucleoproteins"/>
    <property type="match status" value="1"/>
</dbReference>
<dbReference type="PROSITE" id="PS52002">
    <property type="entry name" value="SM"/>
    <property type="match status" value="1"/>
</dbReference>
<organism>
    <name type="scientific">Vibrio parahaemolyticus serotype O3:K6 (strain RIMD 2210633)</name>
    <dbReference type="NCBI Taxonomy" id="223926"/>
    <lineage>
        <taxon>Bacteria</taxon>
        <taxon>Pseudomonadati</taxon>
        <taxon>Pseudomonadota</taxon>
        <taxon>Gammaproteobacteria</taxon>
        <taxon>Vibrionales</taxon>
        <taxon>Vibrionaceae</taxon>
        <taxon>Vibrio</taxon>
    </lineage>
</organism>
<gene>
    <name evidence="1" type="primary">hfq</name>
    <name type="ordered locus">VP2817</name>
</gene>
<comment type="function">
    <text evidence="1">RNA chaperone that binds small regulatory RNA (sRNAs) and mRNAs to facilitate mRNA translational regulation in response to envelope stress, environmental stress and changes in metabolite concentrations. Also binds with high specificity to tRNAs.</text>
</comment>
<comment type="subunit">
    <text evidence="1">Homohexamer.</text>
</comment>
<comment type="similarity">
    <text evidence="1">Belongs to the Hfq family.</text>
</comment>
<feature type="chain" id="PRO_0000095667" description="RNA-binding protein Hfq">
    <location>
        <begin position="1"/>
        <end position="87"/>
    </location>
</feature>
<feature type="domain" description="Sm" evidence="2">
    <location>
        <begin position="9"/>
        <end position="68"/>
    </location>
</feature>
<feature type="region of interest" description="Disordered" evidence="3">
    <location>
        <begin position="65"/>
        <end position="87"/>
    </location>
</feature>
<feature type="compositionally biased region" description="Basic and acidic residues" evidence="3">
    <location>
        <begin position="71"/>
        <end position="87"/>
    </location>
</feature>
<reference key="1">
    <citation type="journal article" date="2003" name="Lancet">
        <title>Genome sequence of Vibrio parahaemolyticus: a pathogenic mechanism distinct from that of V. cholerae.</title>
        <authorList>
            <person name="Makino K."/>
            <person name="Oshima K."/>
            <person name="Kurokawa K."/>
            <person name="Yokoyama K."/>
            <person name="Uda T."/>
            <person name="Tagomori K."/>
            <person name="Iijima Y."/>
            <person name="Najima M."/>
            <person name="Nakano M."/>
            <person name="Yamashita A."/>
            <person name="Kubota Y."/>
            <person name="Kimura S."/>
            <person name="Yasunaga T."/>
            <person name="Honda T."/>
            <person name="Shinagawa H."/>
            <person name="Hattori M."/>
            <person name="Iida T."/>
        </authorList>
    </citation>
    <scope>NUCLEOTIDE SEQUENCE [LARGE SCALE GENOMIC DNA]</scope>
    <source>
        <strain>RIMD 2210633</strain>
    </source>
</reference>
<accession>Q87L07</accession>
<name>HFQ_VIBPA</name>
<protein>
    <recommendedName>
        <fullName evidence="1">RNA-binding protein Hfq</fullName>
    </recommendedName>
</protein>